<keyword id="KW-0997">Cell inner membrane</keyword>
<keyword id="KW-1003">Cell membrane</keyword>
<keyword id="KW-0472">Membrane</keyword>
<keyword id="KW-0479">Metal-binding</keyword>
<keyword id="KW-0614">Plasmid</keyword>
<keyword id="KW-1185">Reference proteome</keyword>
<keyword id="KW-0813">Transport</keyword>
<keyword id="KW-0862">Zinc</keyword>
<name>DABA2_NITHX</name>
<feature type="chain" id="PRO_0000387278" description="Probable inorganic carbon transporter subunit DabA 2">
    <location>
        <begin position="1"/>
        <end position="1039"/>
    </location>
</feature>
<feature type="binding site" evidence="1">
    <location>
        <position position="462"/>
    </location>
    <ligand>
        <name>Zn(2+)</name>
        <dbReference type="ChEBI" id="CHEBI:29105"/>
    </ligand>
</feature>
<feature type="binding site" evidence="1">
    <location>
        <position position="464"/>
    </location>
    <ligand>
        <name>Zn(2+)</name>
        <dbReference type="ChEBI" id="CHEBI:29105"/>
    </ligand>
</feature>
<feature type="binding site" evidence="1">
    <location>
        <position position="721"/>
    </location>
    <ligand>
        <name>Zn(2+)</name>
        <dbReference type="ChEBI" id="CHEBI:29105"/>
    </ligand>
</feature>
<feature type="binding site" evidence="1">
    <location>
        <position position="736"/>
    </location>
    <ligand>
        <name>Zn(2+)</name>
        <dbReference type="ChEBI" id="CHEBI:29105"/>
    </ligand>
</feature>
<sequence length="1039" mass="117094">MVMVDALNLGRRLRVRSTAYVAGEPVPFSWPMRTFISRNPLYGLEHMPFEQAVRRGAELFHARMFLPRSDYQRWQREGKVRQDTLAEEIARRAQALPAVPGIDWPRWLQALMQSAHDRDVVVPGVRAPDVHAALHGQPPSAQAVDVAVLLPALEQRLHGLTLPEAVDALWGTRLADELDELVIKSYLDFFDEDQSSWRMPGRERGLFAAWSEIAQRNARMFLRRLHVRRTLGRVQDPESAVVHVMEEMGIDPDAWSAYFTRELTRLYGWTGFVRWRSSAKHYYWAQRYPAEVVDLLAVRLVVGLALLQESARHRRTPVRREQLDALLHERGAECLLRNALHSGEVLPDWAQRIDDTLSRGGSKRCEALLQRYWPLWQARQGQDQAAALRELAAAADATAALEVLSPEDIAGLIQGLQEFARQEGMVWTLAMEAQAIDQLLAQVQVPQDLAAGKRPFAQAWFCIDVRAEPIRRHLERVGDYQTFGIAGFFGVPVGFLGYGKGSESHFCPAVVTPKNLVLELPAELDPEEDDLLSTLGHVLHDLKSSVLSPYVTVEAVGMLFGLDLFGKTLAPLGYSRWRNRIDADKPVTRLLVDKLTREQADSIIRTLQRAMIVKALHAELHIERERVDDDMIRELRETALRHREGPTRLQRTFGVSDKQEAEFIDKLREVYRVDADYASYQLVRLGRIGYSLDEQVNYVHTALTMIGLTKTFSRFVLIVGHSGQTENNPYESALDCGACGGASGLVNARVLAQMANKTAVRERLRGMGIDIPDDTWFLPALHNTTTDAIELSDLVLLPPRHLVYLDRLRNGLRAASRLAAAERMPKLLPQARAIEPAQAWRLAHRLAVDWAQVRPEWGLSKNVYGIIGRRSLSERADLQGRPFLMSYDWRCDPKGRLLENLLAAPVVVGQWINLEYFFSTVDNARLGSGSKAYHNVAGRFGVMTGSLSDLRTGLPAQTVMREGQPYHEPMRMIALIEAPLDFAGRALQSVVKVKSLVLGGWIRAIVIDPTQGYKPFVFNNGQWEERPPLVAPAEEEHAA</sequence>
<gene>
    <name evidence="1" type="primary">dabA2</name>
    <name type="ordered locus">Nham_4329</name>
</gene>
<evidence type="ECO:0000255" key="1">
    <source>
        <dbReference type="HAMAP-Rule" id="MF_01871"/>
    </source>
</evidence>
<proteinExistence type="inferred from homology"/>
<protein>
    <recommendedName>
        <fullName evidence="1">Probable inorganic carbon transporter subunit DabA 2</fullName>
    </recommendedName>
</protein>
<organism>
    <name type="scientific">Nitrobacter hamburgensis (strain DSM 10229 / NCIMB 13809 / X14)</name>
    <dbReference type="NCBI Taxonomy" id="323097"/>
    <lineage>
        <taxon>Bacteria</taxon>
        <taxon>Pseudomonadati</taxon>
        <taxon>Pseudomonadota</taxon>
        <taxon>Alphaproteobacteria</taxon>
        <taxon>Hyphomicrobiales</taxon>
        <taxon>Nitrobacteraceae</taxon>
        <taxon>Nitrobacter</taxon>
    </lineage>
</organism>
<reference key="1">
    <citation type="submission" date="2006-03" db="EMBL/GenBank/DDBJ databases">
        <title>Complete sequence of plasmid 1 of Nitrobacter hamburgensis X14.</title>
        <authorList>
            <consortium name="US DOE Joint Genome Institute"/>
            <person name="Copeland A."/>
            <person name="Lucas S."/>
            <person name="Lapidus A."/>
            <person name="Barry K."/>
            <person name="Detter J.C."/>
            <person name="Glavina del Rio T."/>
            <person name="Hammon N."/>
            <person name="Israni S."/>
            <person name="Dalin E."/>
            <person name="Tice H."/>
            <person name="Pitluck S."/>
            <person name="Chain P."/>
            <person name="Malfatti S."/>
            <person name="Shin M."/>
            <person name="Vergez L."/>
            <person name="Schmutz J."/>
            <person name="Larimer F."/>
            <person name="Land M."/>
            <person name="Hauser L."/>
            <person name="Kyrpides N."/>
            <person name="Ivanova N."/>
            <person name="Ward B."/>
            <person name="Arp D."/>
            <person name="Klotz M."/>
            <person name="Stein L."/>
            <person name="O'Mullan G."/>
            <person name="Starkenburg S."/>
            <person name="Sayavedra L."/>
            <person name="Poret-Peterson A.T."/>
            <person name="Gentry M.E."/>
            <person name="Bruce D."/>
            <person name="Richardson P."/>
        </authorList>
    </citation>
    <scope>NUCLEOTIDE SEQUENCE [LARGE SCALE GENOMIC DNA]</scope>
    <source>
        <strain>DSM 10229 / NCIMB 13809 / X14</strain>
    </source>
</reference>
<comment type="function">
    <text evidence="1">Part of an energy-coupled inorganic carbon pump.</text>
</comment>
<comment type="cofactor">
    <cofactor evidence="1">
        <name>Zn(2+)</name>
        <dbReference type="ChEBI" id="CHEBI:29105"/>
    </cofactor>
</comment>
<comment type="subunit">
    <text evidence="1">Forms a complex with DabB.</text>
</comment>
<comment type="subcellular location">
    <subcellularLocation>
        <location evidence="1">Cell inner membrane</location>
        <topology evidence="1">Peripheral membrane protein</topology>
    </subcellularLocation>
</comment>
<comment type="similarity">
    <text evidence="1">Belongs to the inorganic carbon transporter (TC 9.A.2) DabA family.</text>
</comment>
<geneLocation type="plasmid">
    <name>pNITHX1</name>
</geneLocation>
<dbReference type="EMBL" id="CP000320">
    <property type="protein sequence ID" value="ABE64924.1"/>
    <property type="molecule type" value="Genomic_DNA"/>
</dbReference>
<dbReference type="KEGG" id="nha:Nham_4329"/>
<dbReference type="HOGENOM" id="CLU_009885_0_0_5"/>
<dbReference type="OrthoDB" id="9805101at2"/>
<dbReference type="Proteomes" id="UP000001953">
    <property type="component" value="Plasmid pNITHX1"/>
</dbReference>
<dbReference type="GO" id="GO:0005886">
    <property type="term" value="C:plasma membrane"/>
    <property type="evidence" value="ECO:0007669"/>
    <property type="project" value="UniProtKB-SubCell"/>
</dbReference>
<dbReference type="GO" id="GO:0008270">
    <property type="term" value="F:zinc ion binding"/>
    <property type="evidence" value="ECO:0007669"/>
    <property type="project" value="UniProtKB-UniRule"/>
</dbReference>
<dbReference type="HAMAP" id="MF_01871">
    <property type="entry name" value="DabA"/>
    <property type="match status" value="1"/>
</dbReference>
<dbReference type="InterPro" id="IPR018752">
    <property type="entry name" value="DabA"/>
</dbReference>
<dbReference type="PANTHER" id="PTHR38344:SF1">
    <property type="entry name" value="INORGANIC CARBON TRANSPORTER SUBUNIT DABA-RELATED"/>
    <property type="match status" value="1"/>
</dbReference>
<dbReference type="PANTHER" id="PTHR38344">
    <property type="entry name" value="UPF0753 PROTEIN AQ_863"/>
    <property type="match status" value="1"/>
</dbReference>
<dbReference type="Pfam" id="PF10070">
    <property type="entry name" value="DabA"/>
    <property type="match status" value="1"/>
</dbReference>
<accession>Q1QFS3</accession>